<accession>P31960</accession>
<gene>
    <name type="primary">leuD</name>
</gene>
<proteinExistence type="inferred from homology"/>
<name>LEUD_CLOPA</name>
<reference key="1">
    <citation type="journal article" date="1993" name="DNA Seq.">
        <title>The nucleotide sequence of genes involved in the leucine biosynthetic pathway of Clostridium pasteurianum.</title>
        <authorList>
            <person name="Oultram J.D."/>
            <person name="Loughlin M."/>
            <person name="Walmsley R.W."/>
            <person name="Gunnery S.M."/>
            <person name="Minton N.P."/>
        </authorList>
    </citation>
    <scope>NUCLEOTIDE SEQUENCE [GENOMIC DNA]</scope>
</reference>
<keyword id="KW-0028">Amino-acid biosynthesis</keyword>
<keyword id="KW-0100">Branched-chain amino acid biosynthesis</keyword>
<keyword id="KW-0432">Leucine biosynthesis</keyword>
<keyword id="KW-0456">Lyase</keyword>
<dbReference type="EC" id="4.2.1.33"/>
<dbReference type="EMBL" id="L06666">
    <property type="protein sequence ID" value="AAC41393.1"/>
    <property type="molecule type" value="Genomic_DNA"/>
</dbReference>
<dbReference type="SMR" id="P31960"/>
<dbReference type="UniPathway" id="UPA00048">
    <property type="reaction ID" value="UER00071"/>
</dbReference>
<dbReference type="GO" id="GO:0003861">
    <property type="term" value="F:3-isopropylmalate dehydratase activity"/>
    <property type="evidence" value="ECO:0007669"/>
    <property type="project" value="UniProtKB-EC"/>
</dbReference>
<dbReference type="GO" id="GO:0009098">
    <property type="term" value="P:L-leucine biosynthetic process"/>
    <property type="evidence" value="ECO:0007669"/>
    <property type="project" value="UniProtKB-UniPathway"/>
</dbReference>
<dbReference type="Gene3D" id="3.20.19.10">
    <property type="entry name" value="Aconitase, domain 4"/>
    <property type="match status" value="1"/>
</dbReference>
<dbReference type="InterPro" id="IPR015928">
    <property type="entry name" value="Aconitase/3IPM_dehydase_swvl"/>
</dbReference>
<dbReference type="InterPro" id="IPR000573">
    <property type="entry name" value="AconitaseA/IPMdHydase_ssu_swvl"/>
</dbReference>
<dbReference type="InterPro" id="IPR050075">
    <property type="entry name" value="LeuD"/>
</dbReference>
<dbReference type="PANTHER" id="PTHR43345:SF2">
    <property type="entry name" value="3-ISOPROPYLMALATE DEHYDRATASE SMALL SUBUNIT 1"/>
    <property type="match status" value="1"/>
</dbReference>
<dbReference type="PANTHER" id="PTHR43345">
    <property type="entry name" value="3-ISOPROPYLMALATE DEHYDRATASE SMALL SUBUNIT 2-RELATED-RELATED"/>
    <property type="match status" value="1"/>
</dbReference>
<dbReference type="Pfam" id="PF00694">
    <property type="entry name" value="Aconitase_C"/>
    <property type="match status" value="1"/>
</dbReference>
<dbReference type="SUPFAM" id="SSF52016">
    <property type="entry name" value="LeuD/IlvD-like"/>
    <property type="match status" value="1"/>
</dbReference>
<evidence type="ECO:0000250" key="1"/>
<evidence type="ECO:0000305" key="2"/>
<sequence length="100" mass="11108">HAPIALKAAGVSCVIAKSFARIFYRNSINIGFPILECEEAVNDAKNNHELEVDFTTGIIKNITLGKEYKAQAYPQFMIDIMKNEGLINCVKNGALNSFMR</sequence>
<comment type="function">
    <text evidence="1">Catalyzes the isomerization between 2-isopropylmalate and 3-isopropylmalate, via the formation of 2-isopropylmaleate.</text>
</comment>
<comment type="catalytic activity">
    <reaction>
        <text>(2R,3S)-3-isopropylmalate = (2S)-2-isopropylmalate</text>
        <dbReference type="Rhea" id="RHEA:32287"/>
        <dbReference type="ChEBI" id="CHEBI:1178"/>
        <dbReference type="ChEBI" id="CHEBI:35121"/>
        <dbReference type="EC" id="4.2.1.33"/>
    </reaction>
</comment>
<comment type="pathway">
    <text>Amino-acid biosynthesis; L-leucine biosynthesis; L-leucine from 3-methyl-2-oxobutanoate: step 2/4.</text>
</comment>
<comment type="subunit">
    <text>Heterodimer of LeuC and LeuD.</text>
</comment>
<comment type="similarity">
    <text evidence="2">Belongs to the LeuD family. LeuD type 2 subfamily.</text>
</comment>
<protein>
    <recommendedName>
        <fullName>3-isopropylmalate dehydratase small subunit</fullName>
        <ecNumber>4.2.1.33</ecNumber>
    </recommendedName>
    <alternativeName>
        <fullName>Alpha-IPM isomerase</fullName>
        <shortName>IPMI</shortName>
    </alternativeName>
    <alternativeName>
        <fullName>Isopropylmalate isomerase</fullName>
    </alternativeName>
</protein>
<organism>
    <name type="scientific">Clostridium pasteurianum</name>
    <dbReference type="NCBI Taxonomy" id="1501"/>
    <lineage>
        <taxon>Bacteria</taxon>
        <taxon>Bacillati</taxon>
        <taxon>Bacillota</taxon>
        <taxon>Clostridia</taxon>
        <taxon>Eubacteriales</taxon>
        <taxon>Clostridiaceae</taxon>
        <taxon>Clostridium</taxon>
    </lineage>
</organism>
<feature type="chain" id="PRO_0000141922" description="3-isopropylmalate dehydratase small subunit">
    <location>
        <begin position="1" status="less than"/>
        <end position="100"/>
    </location>
</feature>
<feature type="non-terminal residue">
    <location>
        <position position="1"/>
    </location>
</feature>